<dbReference type="EMBL" id="CP000431">
    <property type="protein sequence ID" value="ABG93795.1"/>
    <property type="molecule type" value="Genomic_DNA"/>
</dbReference>
<dbReference type="SMR" id="Q0SF91"/>
<dbReference type="KEGG" id="rha:RHA1_ro01985"/>
<dbReference type="eggNOG" id="COG0267">
    <property type="taxonomic scope" value="Bacteria"/>
</dbReference>
<dbReference type="HOGENOM" id="CLU_190949_0_2_11"/>
<dbReference type="OrthoDB" id="21586at2"/>
<dbReference type="Proteomes" id="UP000008710">
    <property type="component" value="Chromosome"/>
</dbReference>
<dbReference type="GO" id="GO:0005737">
    <property type="term" value="C:cytoplasm"/>
    <property type="evidence" value="ECO:0007669"/>
    <property type="project" value="UniProtKB-ARBA"/>
</dbReference>
<dbReference type="GO" id="GO:1990904">
    <property type="term" value="C:ribonucleoprotein complex"/>
    <property type="evidence" value="ECO:0007669"/>
    <property type="project" value="UniProtKB-KW"/>
</dbReference>
<dbReference type="GO" id="GO:0005840">
    <property type="term" value="C:ribosome"/>
    <property type="evidence" value="ECO:0007669"/>
    <property type="project" value="UniProtKB-KW"/>
</dbReference>
<dbReference type="GO" id="GO:0003735">
    <property type="term" value="F:structural constituent of ribosome"/>
    <property type="evidence" value="ECO:0007669"/>
    <property type="project" value="InterPro"/>
</dbReference>
<dbReference type="GO" id="GO:0006412">
    <property type="term" value="P:translation"/>
    <property type="evidence" value="ECO:0007669"/>
    <property type="project" value="UniProtKB-UniRule"/>
</dbReference>
<dbReference type="Gene3D" id="2.20.28.120">
    <property type="entry name" value="Ribosomal protein L33"/>
    <property type="match status" value="1"/>
</dbReference>
<dbReference type="HAMAP" id="MF_00294">
    <property type="entry name" value="Ribosomal_bL33"/>
    <property type="match status" value="1"/>
</dbReference>
<dbReference type="InterPro" id="IPR001705">
    <property type="entry name" value="Ribosomal_bL33"/>
</dbReference>
<dbReference type="InterPro" id="IPR018264">
    <property type="entry name" value="Ribosomal_bL33_CS"/>
</dbReference>
<dbReference type="InterPro" id="IPR038584">
    <property type="entry name" value="Ribosomal_bL33_sf"/>
</dbReference>
<dbReference type="InterPro" id="IPR011332">
    <property type="entry name" value="Ribosomal_zn-bd"/>
</dbReference>
<dbReference type="NCBIfam" id="NF001764">
    <property type="entry name" value="PRK00504.1"/>
    <property type="match status" value="1"/>
</dbReference>
<dbReference type="NCBIfam" id="NF001860">
    <property type="entry name" value="PRK00595.1"/>
    <property type="match status" value="1"/>
</dbReference>
<dbReference type="NCBIfam" id="TIGR01023">
    <property type="entry name" value="rpmG_bact"/>
    <property type="match status" value="1"/>
</dbReference>
<dbReference type="PANTHER" id="PTHR43168">
    <property type="entry name" value="50S RIBOSOMAL PROTEIN L33, CHLOROPLASTIC"/>
    <property type="match status" value="1"/>
</dbReference>
<dbReference type="PANTHER" id="PTHR43168:SF2">
    <property type="entry name" value="LARGE RIBOSOMAL SUBUNIT PROTEIN BL33C"/>
    <property type="match status" value="1"/>
</dbReference>
<dbReference type="Pfam" id="PF00471">
    <property type="entry name" value="Ribosomal_L33"/>
    <property type="match status" value="1"/>
</dbReference>
<dbReference type="SUPFAM" id="SSF57829">
    <property type="entry name" value="Zn-binding ribosomal proteins"/>
    <property type="match status" value="1"/>
</dbReference>
<dbReference type="PROSITE" id="PS00582">
    <property type="entry name" value="RIBOSOMAL_L33"/>
    <property type="match status" value="1"/>
</dbReference>
<keyword id="KW-0687">Ribonucleoprotein</keyword>
<keyword id="KW-0689">Ribosomal protein</keyword>
<comment type="similarity">
    <text evidence="1">Belongs to the bacterial ribosomal protein bL33 family.</text>
</comment>
<feature type="chain" id="PRO_0000356630" description="Large ribosomal subunit protein bL33A">
    <location>
        <begin position="1"/>
        <end position="55"/>
    </location>
</feature>
<organism>
    <name type="scientific">Rhodococcus jostii (strain RHA1)</name>
    <dbReference type="NCBI Taxonomy" id="101510"/>
    <lineage>
        <taxon>Bacteria</taxon>
        <taxon>Bacillati</taxon>
        <taxon>Actinomycetota</taxon>
        <taxon>Actinomycetes</taxon>
        <taxon>Mycobacteriales</taxon>
        <taxon>Nocardiaceae</taxon>
        <taxon>Rhodococcus</taxon>
    </lineage>
</organism>
<gene>
    <name evidence="1" type="primary">rpmG1</name>
    <name type="ordered locus">RHA1_ro01985</name>
</gene>
<reference key="1">
    <citation type="journal article" date="2006" name="Proc. Natl. Acad. Sci. U.S.A.">
        <title>The complete genome of Rhodococcus sp. RHA1 provides insights into a catabolic powerhouse.</title>
        <authorList>
            <person name="McLeod M.P."/>
            <person name="Warren R.L."/>
            <person name="Hsiao W.W.L."/>
            <person name="Araki N."/>
            <person name="Myhre M."/>
            <person name="Fernandes C."/>
            <person name="Miyazawa D."/>
            <person name="Wong W."/>
            <person name="Lillquist A.L."/>
            <person name="Wang D."/>
            <person name="Dosanjh M."/>
            <person name="Hara H."/>
            <person name="Petrescu A."/>
            <person name="Morin R.D."/>
            <person name="Yang G."/>
            <person name="Stott J.M."/>
            <person name="Schein J.E."/>
            <person name="Shin H."/>
            <person name="Smailus D."/>
            <person name="Siddiqui A.S."/>
            <person name="Marra M.A."/>
            <person name="Jones S.J.M."/>
            <person name="Holt R."/>
            <person name="Brinkman F.S.L."/>
            <person name="Miyauchi K."/>
            <person name="Fukuda M."/>
            <person name="Davies J.E."/>
            <person name="Mohn W.W."/>
            <person name="Eltis L.D."/>
        </authorList>
    </citation>
    <scope>NUCLEOTIDE SEQUENCE [LARGE SCALE GENOMIC DNA]</scope>
    <source>
        <strain>RHA1</strain>
    </source>
</reference>
<sequence>MASSTDVRPKITLACEVCKHRNYITKKNRRNDPDRLELKKFCPNCGTHQSHRESK</sequence>
<name>RL331_RHOJR</name>
<evidence type="ECO:0000255" key="1">
    <source>
        <dbReference type="HAMAP-Rule" id="MF_00294"/>
    </source>
</evidence>
<proteinExistence type="inferred from homology"/>
<protein>
    <recommendedName>
        <fullName evidence="1">Large ribosomal subunit protein bL33A</fullName>
    </recommendedName>
    <alternativeName>
        <fullName evidence="1">50S ribosomal protein L33 1</fullName>
    </alternativeName>
</protein>
<accession>Q0SF91</accession>